<organism>
    <name type="scientific">Bothriechis schlegelii</name>
    <name type="common">Eyelash palm pitviper</name>
    <dbReference type="NCBI Taxonomy" id="44725"/>
    <lineage>
        <taxon>Eukaryota</taxon>
        <taxon>Metazoa</taxon>
        <taxon>Chordata</taxon>
        <taxon>Craniata</taxon>
        <taxon>Vertebrata</taxon>
        <taxon>Euteleostomi</taxon>
        <taxon>Lepidosauria</taxon>
        <taxon>Squamata</taxon>
        <taxon>Bifurcata</taxon>
        <taxon>Unidentata</taxon>
        <taxon>Episquamata</taxon>
        <taxon>Toxicofera</taxon>
        <taxon>Serpentes</taxon>
        <taxon>Colubroidea</taxon>
        <taxon>Viperidae</taxon>
        <taxon>Crotalinae</taxon>
        <taxon>Bothriechis</taxon>
    </lineage>
</organism>
<gene>
    <name type="primary">MT-ND4</name>
    <name type="synonym">MTND4</name>
    <name type="synonym">NADH4</name>
    <name type="synonym">ND4</name>
</gene>
<comment type="function">
    <text evidence="1">Core subunit of the mitochondrial membrane respiratory chain NADH dehydrogenase (Complex I) that is believed to belong to the minimal assembly required for catalysis. Complex I functions in the transfer of electrons from NADH to the respiratory chain. The immediate electron acceptor for the enzyme is believed to be ubiquinone (By similarity).</text>
</comment>
<comment type="catalytic activity">
    <reaction>
        <text>a ubiquinone + NADH + 5 H(+)(in) = a ubiquinol + NAD(+) + 4 H(+)(out)</text>
        <dbReference type="Rhea" id="RHEA:29091"/>
        <dbReference type="Rhea" id="RHEA-COMP:9565"/>
        <dbReference type="Rhea" id="RHEA-COMP:9566"/>
        <dbReference type="ChEBI" id="CHEBI:15378"/>
        <dbReference type="ChEBI" id="CHEBI:16389"/>
        <dbReference type="ChEBI" id="CHEBI:17976"/>
        <dbReference type="ChEBI" id="CHEBI:57540"/>
        <dbReference type="ChEBI" id="CHEBI:57945"/>
        <dbReference type="EC" id="7.1.1.2"/>
    </reaction>
</comment>
<comment type="subcellular location">
    <subcellularLocation>
        <location evidence="1">Mitochondrion membrane</location>
        <topology evidence="1">Multi-pass membrane protein</topology>
    </subcellularLocation>
</comment>
<comment type="similarity">
    <text evidence="3">Belongs to the complex I subunit 4 family.</text>
</comment>
<geneLocation type="mitochondrion"/>
<keyword id="KW-0249">Electron transport</keyword>
<keyword id="KW-0472">Membrane</keyword>
<keyword id="KW-0496">Mitochondrion</keyword>
<keyword id="KW-0520">NAD</keyword>
<keyword id="KW-0679">Respiratory chain</keyword>
<keyword id="KW-1278">Translocase</keyword>
<keyword id="KW-0812">Transmembrane</keyword>
<keyword id="KW-1133">Transmembrane helix</keyword>
<keyword id="KW-0813">Transport</keyword>
<keyword id="KW-0830">Ubiquinone</keyword>
<proteinExistence type="inferred from homology"/>
<reference key="1">
    <citation type="journal article" date="1996" name="Copeia">
        <title>Crotaline intergeneric relationships based on mitochondrial DNA sequence data.</title>
        <authorList>
            <person name="Kraus F."/>
            <person name="Mink D.G."/>
            <person name="Brown W.M."/>
        </authorList>
    </citation>
    <scope>NUCLEOTIDE SEQUENCE [GENOMIC DNA]</scope>
</reference>
<sequence length="231" mass="25556">PIAGSMVLAAILLKLGGYGMIRMMQILPTTKTDMFMPFIVLALWGAILANLTCLQQTDLKSLIAYSSISHMGLVVAAIIIQTPWGLSGAMALMIAHGFTSSALFCLANTTYERTHTRILIMTRGFHNILPMTTTWWLLANLMNIAIPPSMNFTGEFLIMSALFNWAPTTIILLGLSMLITASYSLHMFLSTQMGPTQLNNQTEPTHSREHLLMTLHLIPLMMISMKPELIT</sequence>
<accession>O03701</accession>
<feature type="chain" id="PRO_0000117905" description="NADH-ubiquinone oxidoreductase chain 4">
    <location>
        <begin position="1" status="less than"/>
        <end position="231" status="greater than"/>
    </location>
</feature>
<feature type="transmembrane region" description="Helical" evidence="2">
    <location>
        <begin position="1"/>
        <end position="21"/>
    </location>
</feature>
<feature type="transmembrane region" description="Helical" evidence="2">
    <location>
        <begin position="34"/>
        <end position="54"/>
    </location>
</feature>
<feature type="transmembrane region" description="Helical" evidence="2">
    <location>
        <begin position="63"/>
        <end position="85"/>
    </location>
</feature>
<feature type="transmembrane region" description="Helical" evidence="2">
    <location>
        <begin position="89"/>
        <end position="111"/>
    </location>
</feature>
<feature type="transmembrane region" description="Helical" evidence="2">
    <location>
        <begin position="128"/>
        <end position="148"/>
    </location>
</feature>
<feature type="transmembrane region" description="Helical" evidence="2">
    <location>
        <begin position="156"/>
        <end position="176"/>
    </location>
</feature>
<feature type="non-terminal residue">
    <location>
        <position position="1"/>
    </location>
</feature>
<feature type="non-terminal residue">
    <location>
        <position position="231"/>
    </location>
</feature>
<protein>
    <recommendedName>
        <fullName>NADH-ubiquinone oxidoreductase chain 4</fullName>
        <ecNumber>7.1.1.2</ecNumber>
    </recommendedName>
    <alternativeName>
        <fullName>NADH dehydrogenase subunit 4</fullName>
    </alternativeName>
</protein>
<evidence type="ECO:0000250" key="1"/>
<evidence type="ECO:0000255" key="2"/>
<evidence type="ECO:0000305" key="3"/>
<name>NU4M_BOTSC</name>
<dbReference type="EC" id="7.1.1.2"/>
<dbReference type="EMBL" id="U41874">
    <property type="protein sequence ID" value="AAB46636.1"/>
    <property type="molecule type" value="Genomic_DNA"/>
</dbReference>
<dbReference type="SMR" id="O03701"/>
<dbReference type="GO" id="GO:0031966">
    <property type="term" value="C:mitochondrial membrane"/>
    <property type="evidence" value="ECO:0007669"/>
    <property type="project" value="UniProtKB-SubCell"/>
</dbReference>
<dbReference type="GO" id="GO:0008137">
    <property type="term" value="F:NADH dehydrogenase (ubiquinone) activity"/>
    <property type="evidence" value="ECO:0007669"/>
    <property type="project" value="UniProtKB-EC"/>
</dbReference>
<dbReference type="GO" id="GO:0048039">
    <property type="term" value="F:ubiquinone binding"/>
    <property type="evidence" value="ECO:0007669"/>
    <property type="project" value="TreeGrafter"/>
</dbReference>
<dbReference type="GO" id="GO:0042773">
    <property type="term" value="P:ATP synthesis coupled electron transport"/>
    <property type="evidence" value="ECO:0007669"/>
    <property type="project" value="InterPro"/>
</dbReference>
<dbReference type="GO" id="GO:0015990">
    <property type="term" value="P:electron transport coupled proton transport"/>
    <property type="evidence" value="ECO:0007669"/>
    <property type="project" value="TreeGrafter"/>
</dbReference>
<dbReference type="InterPro" id="IPR003918">
    <property type="entry name" value="NADH_UbQ_OxRdtase"/>
</dbReference>
<dbReference type="InterPro" id="IPR001750">
    <property type="entry name" value="ND/Mrp_TM"/>
</dbReference>
<dbReference type="PANTHER" id="PTHR43507">
    <property type="entry name" value="NADH-UBIQUINONE OXIDOREDUCTASE CHAIN 4"/>
    <property type="match status" value="1"/>
</dbReference>
<dbReference type="PANTHER" id="PTHR43507:SF20">
    <property type="entry name" value="NADH-UBIQUINONE OXIDOREDUCTASE CHAIN 4"/>
    <property type="match status" value="1"/>
</dbReference>
<dbReference type="Pfam" id="PF00361">
    <property type="entry name" value="Proton_antipo_M"/>
    <property type="match status" value="1"/>
</dbReference>